<reference key="1">
    <citation type="journal article" date="2007" name="PLoS ONE">
        <title>Analysis of the neurotoxin complex genes in Clostridium botulinum A1-A4 and B1 strains: BoNT/A3, /Ba4 and /B1 clusters are located within plasmids.</title>
        <authorList>
            <person name="Smith T.J."/>
            <person name="Hill K.K."/>
            <person name="Foley B.T."/>
            <person name="Detter J.C."/>
            <person name="Munk A.C."/>
            <person name="Bruce D.C."/>
            <person name="Doggett N.A."/>
            <person name="Smith L.A."/>
            <person name="Marks J.D."/>
            <person name="Xie G."/>
            <person name="Brettin T.S."/>
        </authorList>
    </citation>
    <scope>NUCLEOTIDE SEQUENCE [LARGE SCALE GENOMIC DNA]</scope>
    <source>
        <strain>Okra / Type B1</strain>
    </source>
</reference>
<gene>
    <name evidence="1" type="primary">coaD</name>
    <name type="ordered locus">CLD_2144</name>
</gene>
<name>COAD_CLOBK</name>
<sequence length="164" mass="18667">MKTAVYPGSFDPITKGHLNIIKRASKVCDKLIVAVLVNPEKKGLFSVDERVEMIKRVTKNHSNIEVQCFSGLLIDFMKEKKSKVIIKGLRTMSDFEYEFKMALMNNKLDPNIETVFMMTNAKYSYLSSSSVKQVAMFGGCIKDLVPDEIIPDIKKKINHKKECI</sequence>
<keyword id="KW-0067">ATP-binding</keyword>
<keyword id="KW-0173">Coenzyme A biosynthesis</keyword>
<keyword id="KW-0963">Cytoplasm</keyword>
<keyword id="KW-0460">Magnesium</keyword>
<keyword id="KW-0547">Nucleotide-binding</keyword>
<keyword id="KW-0548">Nucleotidyltransferase</keyword>
<keyword id="KW-0808">Transferase</keyword>
<organism>
    <name type="scientific">Clostridium botulinum (strain Okra / Type B1)</name>
    <dbReference type="NCBI Taxonomy" id="498213"/>
    <lineage>
        <taxon>Bacteria</taxon>
        <taxon>Bacillati</taxon>
        <taxon>Bacillota</taxon>
        <taxon>Clostridia</taxon>
        <taxon>Eubacteriales</taxon>
        <taxon>Clostridiaceae</taxon>
        <taxon>Clostridium</taxon>
    </lineage>
</organism>
<accession>B1IIK4</accession>
<feature type="chain" id="PRO_1000096781" description="Phosphopantetheine adenylyltransferase">
    <location>
        <begin position="1"/>
        <end position="164"/>
    </location>
</feature>
<feature type="binding site" evidence="1">
    <location>
        <begin position="9"/>
        <end position="10"/>
    </location>
    <ligand>
        <name>ATP</name>
        <dbReference type="ChEBI" id="CHEBI:30616"/>
    </ligand>
</feature>
<feature type="binding site" evidence="1">
    <location>
        <position position="9"/>
    </location>
    <ligand>
        <name>substrate</name>
    </ligand>
</feature>
<feature type="binding site" evidence="1">
    <location>
        <position position="17"/>
    </location>
    <ligand>
        <name>ATP</name>
        <dbReference type="ChEBI" id="CHEBI:30616"/>
    </ligand>
</feature>
<feature type="binding site" evidence="1">
    <location>
        <position position="41"/>
    </location>
    <ligand>
        <name>substrate</name>
    </ligand>
</feature>
<feature type="binding site" evidence="1">
    <location>
        <position position="73"/>
    </location>
    <ligand>
        <name>substrate</name>
    </ligand>
</feature>
<feature type="binding site" evidence="1">
    <location>
        <position position="87"/>
    </location>
    <ligand>
        <name>substrate</name>
    </ligand>
</feature>
<feature type="binding site" evidence="1">
    <location>
        <begin position="88"/>
        <end position="90"/>
    </location>
    <ligand>
        <name>ATP</name>
        <dbReference type="ChEBI" id="CHEBI:30616"/>
    </ligand>
</feature>
<feature type="binding site" evidence="1">
    <location>
        <position position="98"/>
    </location>
    <ligand>
        <name>ATP</name>
        <dbReference type="ChEBI" id="CHEBI:30616"/>
    </ligand>
</feature>
<feature type="binding site" evidence="1">
    <location>
        <begin position="123"/>
        <end position="129"/>
    </location>
    <ligand>
        <name>ATP</name>
        <dbReference type="ChEBI" id="CHEBI:30616"/>
    </ligand>
</feature>
<feature type="site" description="Transition state stabilizer" evidence="1">
    <location>
        <position position="17"/>
    </location>
</feature>
<dbReference type="EC" id="2.7.7.3" evidence="1"/>
<dbReference type="EMBL" id="CP000939">
    <property type="protein sequence ID" value="ACA45520.1"/>
    <property type="molecule type" value="Genomic_DNA"/>
</dbReference>
<dbReference type="RefSeq" id="WP_012100414.1">
    <property type="nucleotide sequence ID" value="NC_010516.1"/>
</dbReference>
<dbReference type="SMR" id="B1IIK4"/>
<dbReference type="KEGG" id="cbb:CLD_2144"/>
<dbReference type="HOGENOM" id="CLU_100149_0_1_9"/>
<dbReference type="UniPathway" id="UPA00241">
    <property type="reaction ID" value="UER00355"/>
</dbReference>
<dbReference type="Proteomes" id="UP000008541">
    <property type="component" value="Chromosome"/>
</dbReference>
<dbReference type="GO" id="GO:0005737">
    <property type="term" value="C:cytoplasm"/>
    <property type="evidence" value="ECO:0007669"/>
    <property type="project" value="UniProtKB-SubCell"/>
</dbReference>
<dbReference type="GO" id="GO:0005524">
    <property type="term" value="F:ATP binding"/>
    <property type="evidence" value="ECO:0007669"/>
    <property type="project" value="UniProtKB-KW"/>
</dbReference>
<dbReference type="GO" id="GO:0004595">
    <property type="term" value="F:pantetheine-phosphate adenylyltransferase activity"/>
    <property type="evidence" value="ECO:0007669"/>
    <property type="project" value="UniProtKB-UniRule"/>
</dbReference>
<dbReference type="GO" id="GO:0015937">
    <property type="term" value="P:coenzyme A biosynthetic process"/>
    <property type="evidence" value="ECO:0007669"/>
    <property type="project" value="UniProtKB-UniRule"/>
</dbReference>
<dbReference type="CDD" id="cd02163">
    <property type="entry name" value="PPAT"/>
    <property type="match status" value="1"/>
</dbReference>
<dbReference type="Gene3D" id="3.40.50.620">
    <property type="entry name" value="HUPs"/>
    <property type="match status" value="1"/>
</dbReference>
<dbReference type="HAMAP" id="MF_00151">
    <property type="entry name" value="PPAT_bact"/>
    <property type="match status" value="1"/>
</dbReference>
<dbReference type="InterPro" id="IPR004821">
    <property type="entry name" value="Cyt_trans-like"/>
</dbReference>
<dbReference type="InterPro" id="IPR001980">
    <property type="entry name" value="PPAT"/>
</dbReference>
<dbReference type="InterPro" id="IPR014729">
    <property type="entry name" value="Rossmann-like_a/b/a_fold"/>
</dbReference>
<dbReference type="NCBIfam" id="TIGR01510">
    <property type="entry name" value="coaD_prev_kdtB"/>
    <property type="match status" value="1"/>
</dbReference>
<dbReference type="NCBIfam" id="TIGR00125">
    <property type="entry name" value="cyt_tran_rel"/>
    <property type="match status" value="1"/>
</dbReference>
<dbReference type="PANTHER" id="PTHR21342">
    <property type="entry name" value="PHOSPHOPANTETHEINE ADENYLYLTRANSFERASE"/>
    <property type="match status" value="1"/>
</dbReference>
<dbReference type="PANTHER" id="PTHR21342:SF1">
    <property type="entry name" value="PHOSPHOPANTETHEINE ADENYLYLTRANSFERASE"/>
    <property type="match status" value="1"/>
</dbReference>
<dbReference type="Pfam" id="PF01467">
    <property type="entry name" value="CTP_transf_like"/>
    <property type="match status" value="1"/>
</dbReference>
<dbReference type="PRINTS" id="PR01020">
    <property type="entry name" value="LPSBIOSNTHSS"/>
</dbReference>
<dbReference type="SUPFAM" id="SSF52374">
    <property type="entry name" value="Nucleotidylyl transferase"/>
    <property type="match status" value="1"/>
</dbReference>
<protein>
    <recommendedName>
        <fullName evidence="1">Phosphopantetheine adenylyltransferase</fullName>
        <ecNumber evidence="1">2.7.7.3</ecNumber>
    </recommendedName>
    <alternativeName>
        <fullName evidence="1">Dephospho-CoA pyrophosphorylase</fullName>
    </alternativeName>
    <alternativeName>
        <fullName evidence="1">Pantetheine-phosphate adenylyltransferase</fullName>
        <shortName evidence="1">PPAT</shortName>
    </alternativeName>
</protein>
<evidence type="ECO:0000255" key="1">
    <source>
        <dbReference type="HAMAP-Rule" id="MF_00151"/>
    </source>
</evidence>
<proteinExistence type="inferred from homology"/>
<comment type="function">
    <text evidence="1">Reversibly transfers an adenylyl group from ATP to 4'-phosphopantetheine, yielding dephospho-CoA (dPCoA) and pyrophosphate.</text>
</comment>
<comment type="catalytic activity">
    <reaction evidence="1">
        <text>(R)-4'-phosphopantetheine + ATP + H(+) = 3'-dephospho-CoA + diphosphate</text>
        <dbReference type="Rhea" id="RHEA:19801"/>
        <dbReference type="ChEBI" id="CHEBI:15378"/>
        <dbReference type="ChEBI" id="CHEBI:30616"/>
        <dbReference type="ChEBI" id="CHEBI:33019"/>
        <dbReference type="ChEBI" id="CHEBI:57328"/>
        <dbReference type="ChEBI" id="CHEBI:61723"/>
        <dbReference type="EC" id="2.7.7.3"/>
    </reaction>
</comment>
<comment type="cofactor">
    <cofactor evidence="1">
        <name>Mg(2+)</name>
        <dbReference type="ChEBI" id="CHEBI:18420"/>
    </cofactor>
</comment>
<comment type="pathway">
    <text evidence="1">Cofactor biosynthesis; coenzyme A biosynthesis; CoA from (R)-pantothenate: step 4/5.</text>
</comment>
<comment type="subunit">
    <text evidence="1">Homohexamer.</text>
</comment>
<comment type="subcellular location">
    <subcellularLocation>
        <location evidence="1">Cytoplasm</location>
    </subcellularLocation>
</comment>
<comment type="similarity">
    <text evidence="1">Belongs to the bacterial CoaD family.</text>
</comment>